<comment type="function">
    <text evidence="1">This protein binds to 23S rRNA in the presence of protein L20.</text>
</comment>
<comment type="subunit">
    <text evidence="1">Part of the 50S ribosomal subunit. Contacts protein L20.</text>
</comment>
<comment type="similarity">
    <text evidence="1">Belongs to the bacterial ribosomal protein bL21 family.</text>
</comment>
<evidence type="ECO:0000255" key="1">
    <source>
        <dbReference type="HAMAP-Rule" id="MF_01363"/>
    </source>
</evidence>
<evidence type="ECO:0000305" key="2"/>
<protein>
    <recommendedName>
        <fullName evidence="1">Large ribosomal subunit protein bL21</fullName>
    </recommendedName>
    <alternativeName>
        <fullName evidence="2">50S ribosomal protein L21</fullName>
    </alternativeName>
</protein>
<dbReference type="EMBL" id="CP000243">
    <property type="protein sequence ID" value="ABE09064.1"/>
    <property type="molecule type" value="Genomic_DNA"/>
</dbReference>
<dbReference type="RefSeq" id="WP_000271401.1">
    <property type="nucleotide sequence ID" value="NZ_CP064825.1"/>
</dbReference>
<dbReference type="EMDB" id="EMD-48479"/>
<dbReference type="EMDB" id="EMD-48513"/>
<dbReference type="SMR" id="Q1R6F0"/>
<dbReference type="GeneID" id="93778795"/>
<dbReference type="KEGG" id="eci:UTI89_C3620"/>
<dbReference type="HOGENOM" id="CLU_061463_3_3_6"/>
<dbReference type="Proteomes" id="UP000001952">
    <property type="component" value="Chromosome"/>
</dbReference>
<dbReference type="GO" id="GO:0005737">
    <property type="term" value="C:cytoplasm"/>
    <property type="evidence" value="ECO:0007669"/>
    <property type="project" value="UniProtKB-ARBA"/>
</dbReference>
<dbReference type="GO" id="GO:1990904">
    <property type="term" value="C:ribonucleoprotein complex"/>
    <property type="evidence" value="ECO:0007669"/>
    <property type="project" value="UniProtKB-KW"/>
</dbReference>
<dbReference type="GO" id="GO:0005840">
    <property type="term" value="C:ribosome"/>
    <property type="evidence" value="ECO:0007669"/>
    <property type="project" value="UniProtKB-KW"/>
</dbReference>
<dbReference type="GO" id="GO:0019843">
    <property type="term" value="F:rRNA binding"/>
    <property type="evidence" value="ECO:0007669"/>
    <property type="project" value="UniProtKB-UniRule"/>
</dbReference>
<dbReference type="GO" id="GO:0003735">
    <property type="term" value="F:structural constituent of ribosome"/>
    <property type="evidence" value="ECO:0007669"/>
    <property type="project" value="InterPro"/>
</dbReference>
<dbReference type="GO" id="GO:0006412">
    <property type="term" value="P:translation"/>
    <property type="evidence" value="ECO:0007669"/>
    <property type="project" value="UniProtKB-UniRule"/>
</dbReference>
<dbReference type="HAMAP" id="MF_01363">
    <property type="entry name" value="Ribosomal_bL21"/>
    <property type="match status" value="1"/>
</dbReference>
<dbReference type="InterPro" id="IPR028909">
    <property type="entry name" value="bL21-like"/>
</dbReference>
<dbReference type="InterPro" id="IPR036164">
    <property type="entry name" value="bL21-like_sf"/>
</dbReference>
<dbReference type="InterPro" id="IPR001787">
    <property type="entry name" value="Ribosomal_bL21"/>
</dbReference>
<dbReference type="InterPro" id="IPR018258">
    <property type="entry name" value="Ribosomal_bL21_CS"/>
</dbReference>
<dbReference type="NCBIfam" id="TIGR00061">
    <property type="entry name" value="L21"/>
    <property type="match status" value="1"/>
</dbReference>
<dbReference type="PANTHER" id="PTHR21349">
    <property type="entry name" value="50S RIBOSOMAL PROTEIN L21"/>
    <property type="match status" value="1"/>
</dbReference>
<dbReference type="PANTHER" id="PTHR21349:SF0">
    <property type="entry name" value="LARGE RIBOSOMAL SUBUNIT PROTEIN BL21M"/>
    <property type="match status" value="1"/>
</dbReference>
<dbReference type="Pfam" id="PF00829">
    <property type="entry name" value="Ribosomal_L21p"/>
    <property type="match status" value="1"/>
</dbReference>
<dbReference type="SUPFAM" id="SSF141091">
    <property type="entry name" value="L21p-like"/>
    <property type="match status" value="1"/>
</dbReference>
<dbReference type="PROSITE" id="PS01169">
    <property type="entry name" value="RIBOSOMAL_L21"/>
    <property type="match status" value="1"/>
</dbReference>
<reference key="1">
    <citation type="journal article" date="2006" name="Proc. Natl. Acad. Sci. U.S.A.">
        <title>Identification of genes subject to positive selection in uropathogenic strains of Escherichia coli: a comparative genomics approach.</title>
        <authorList>
            <person name="Chen S.L."/>
            <person name="Hung C.-S."/>
            <person name="Xu J."/>
            <person name="Reigstad C.S."/>
            <person name="Magrini V."/>
            <person name="Sabo A."/>
            <person name="Blasiar D."/>
            <person name="Bieri T."/>
            <person name="Meyer R.R."/>
            <person name="Ozersky P."/>
            <person name="Armstrong J.R."/>
            <person name="Fulton R.S."/>
            <person name="Latreille J.P."/>
            <person name="Spieth J."/>
            <person name="Hooton T.M."/>
            <person name="Mardis E.R."/>
            <person name="Hultgren S.J."/>
            <person name="Gordon J.I."/>
        </authorList>
    </citation>
    <scope>NUCLEOTIDE SEQUENCE [LARGE SCALE GENOMIC DNA]</scope>
    <source>
        <strain>UTI89 / UPEC</strain>
    </source>
</reference>
<accession>Q1R6F0</accession>
<feature type="chain" id="PRO_0000269317" description="Large ribosomal subunit protein bL21">
    <location>
        <begin position="1"/>
        <end position="103"/>
    </location>
</feature>
<sequence length="103" mass="11564">MYAVFQSGGKQHRVSEGQTVRLEKLDIATGETVEFAEVLMIANGEEVKIGVPFVDGGVIKAEVVAHGRGEKVKIVKFRRRKHYRKQQGHRQWFTDVKITGISA</sequence>
<organism>
    <name type="scientific">Escherichia coli (strain UTI89 / UPEC)</name>
    <dbReference type="NCBI Taxonomy" id="364106"/>
    <lineage>
        <taxon>Bacteria</taxon>
        <taxon>Pseudomonadati</taxon>
        <taxon>Pseudomonadota</taxon>
        <taxon>Gammaproteobacteria</taxon>
        <taxon>Enterobacterales</taxon>
        <taxon>Enterobacteriaceae</taxon>
        <taxon>Escherichia</taxon>
    </lineage>
</organism>
<gene>
    <name evidence="1" type="primary">rplU</name>
    <name type="ordered locus">UTI89_C3620</name>
</gene>
<name>RL21_ECOUT</name>
<keyword id="KW-0687">Ribonucleoprotein</keyword>
<keyword id="KW-0689">Ribosomal protein</keyword>
<keyword id="KW-0694">RNA-binding</keyword>
<keyword id="KW-0699">rRNA-binding</keyword>
<proteinExistence type="inferred from homology"/>